<feature type="chain" id="PRO_0000425304" description="Protein G1-like3">
    <location>
        <begin position="1"/>
        <end position="232"/>
    </location>
</feature>
<feature type="domain" description="ALOG" evidence="2">
    <location>
        <begin position="73"/>
        <end position="200"/>
    </location>
</feature>
<feature type="region of interest" description="Disordered" evidence="3">
    <location>
        <begin position="20"/>
        <end position="77"/>
    </location>
</feature>
<feature type="region of interest" description="Disordered" evidence="3">
    <location>
        <begin position="189"/>
        <end position="232"/>
    </location>
</feature>
<feature type="short sequence motif" description="Nuclear localization signal" evidence="1">
    <location>
        <begin position="198"/>
        <end position="202"/>
    </location>
</feature>
<feature type="compositionally biased region" description="Gly residues" evidence="3">
    <location>
        <begin position="38"/>
        <end position="53"/>
    </location>
</feature>
<feature type="compositionally biased region" description="Pro residues" evidence="3">
    <location>
        <begin position="216"/>
        <end position="232"/>
    </location>
</feature>
<name>G1L3_ORYSI</name>
<organism>
    <name type="scientific">Oryza sativa subsp. indica</name>
    <name type="common">Rice</name>
    <dbReference type="NCBI Taxonomy" id="39946"/>
    <lineage>
        <taxon>Eukaryota</taxon>
        <taxon>Viridiplantae</taxon>
        <taxon>Streptophyta</taxon>
        <taxon>Embryophyta</taxon>
        <taxon>Tracheophyta</taxon>
        <taxon>Spermatophyta</taxon>
        <taxon>Magnoliopsida</taxon>
        <taxon>Liliopsida</taxon>
        <taxon>Poales</taxon>
        <taxon>Poaceae</taxon>
        <taxon>BOP clade</taxon>
        <taxon>Oryzoideae</taxon>
        <taxon>Oryzeae</taxon>
        <taxon>Oryzinae</taxon>
        <taxon>Oryza</taxon>
        <taxon>Oryza sativa</taxon>
    </lineage>
</organism>
<sequence>MRGEEEPAVAAAAYTTASKAGLLMELSPPNHESSPPTAGGGGGGGGDGAGGSSSAGASSSAGGGAATPQTPSRYEAQKRRDWNTFGQYLRNHRPPLGLAQCSGAHVLEFLRYLDQFGKTKVHTAACPFFGHPNPPAPCPCPLRQAWGSLDALVGRLRAAFEENGGRPESNPFAVRAVRLYLREVREHQARARGVSYEKKKRKKPQPADTSGGGGHPHPPPPPPPPPSAGAAC</sequence>
<dbReference type="EMBL" id="CM000127">
    <property type="protein sequence ID" value="EEC72404.1"/>
    <property type="molecule type" value="Genomic_DNA"/>
</dbReference>
<dbReference type="SMR" id="B8AH02"/>
<dbReference type="STRING" id="39946.B8AH02"/>
<dbReference type="EnsemblPlants" id="BGIOSGA007449-TA">
    <property type="protein sequence ID" value="BGIOSGA007449-PA"/>
    <property type="gene ID" value="BGIOSGA007449"/>
</dbReference>
<dbReference type="Gramene" id="BGIOSGA007449-TA">
    <property type="protein sequence ID" value="BGIOSGA007449-PA"/>
    <property type="gene ID" value="BGIOSGA007449"/>
</dbReference>
<dbReference type="HOGENOM" id="CLU_071168_0_1_1"/>
<dbReference type="OMA" id="NNSMTML"/>
<dbReference type="Proteomes" id="UP000007015">
    <property type="component" value="Chromosome 2"/>
</dbReference>
<dbReference type="GO" id="GO:0005634">
    <property type="term" value="C:nucleus"/>
    <property type="evidence" value="ECO:0000250"/>
    <property type="project" value="UniProtKB"/>
</dbReference>
<dbReference type="GO" id="GO:0003677">
    <property type="term" value="F:DNA binding"/>
    <property type="evidence" value="ECO:0007669"/>
    <property type="project" value="UniProtKB-KW"/>
</dbReference>
<dbReference type="GO" id="GO:0009299">
    <property type="term" value="P:mRNA transcription"/>
    <property type="evidence" value="ECO:0000250"/>
    <property type="project" value="UniProtKB"/>
</dbReference>
<dbReference type="GO" id="GO:0090698">
    <property type="term" value="P:post-embryonic plant morphogenesis"/>
    <property type="evidence" value="ECO:0000250"/>
    <property type="project" value="UniProtKB"/>
</dbReference>
<dbReference type="GO" id="GO:0009416">
    <property type="term" value="P:response to light stimulus"/>
    <property type="evidence" value="ECO:0007669"/>
    <property type="project" value="TreeGrafter"/>
</dbReference>
<dbReference type="InterPro" id="IPR040222">
    <property type="entry name" value="ALOG"/>
</dbReference>
<dbReference type="InterPro" id="IPR006936">
    <property type="entry name" value="ALOG_dom"/>
</dbReference>
<dbReference type="PANTHER" id="PTHR31165">
    <property type="entry name" value="PROTEIN G1-LIKE2"/>
    <property type="match status" value="1"/>
</dbReference>
<dbReference type="PANTHER" id="PTHR31165:SF43">
    <property type="entry name" value="PROTEIN G1-LIKE3"/>
    <property type="match status" value="1"/>
</dbReference>
<dbReference type="Pfam" id="PF04852">
    <property type="entry name" value="ALOG_dom"/>
    <property type="match status" value="1"/>
</dbReference>
<dbReference type="PROSITE" id="PS51697">
    <property type="entry name" value="ALOG"/>
    <property type="match status" value="1"/>
</dbReference>
<comment type="function">
    <text evidence="1">Probable transcription regulator that acts as a developmental regulator by promoting cell growth in response to light.</text>
</comment>
<comment type="subcellular location">
    <subcellularLocation>
        <location evidence="1">Nucleus</location>
    </subcellularLocation>
</comment>
<comment type="similarity">
    <text evidence="4">Belongs to the plant homeotic and developmental regulators ALOG protein family.</text>
</comment>
<proteinExistence type="inferred from homology"/>
<gene>
    <name type="ORF">OsI_05696</name>
</gene>
<accession>B8AH02</accession>
<reference key="1">
    <citation type="journal article" date="2005" name="PLoS Biol.">
        <title>The genomes of Oryza sativa: a history of duplications.</title>
        <authorList>
            <person name="Yu J."/>
            <person name="Wang J."/>
            <person name="Lin W."/>
            <person name="Li S."/>
            <person name="Li H."/>
            <person name="Zhou J."/>
            <person name="Ni P."/>
            <person name="Dong W."/>
            <person name="Hu S."/>
            <person name="Zeng C."/>
            <person name="Zhang J."/>
            <person name="Zhang Y."/>
            <person name="Li R."/>
            <person name="Xu Z."/>
            <person name="Li S."/>
            <person name="Li X."/>
            <person name="Zheng H."/>
            <person name="Cong L."/>
            <person name="Lin L."/>
            <person name="Yin J."/>
            <person name="Geng J."/>
            <person name="Li G."/>
            <person name="Shi J."/>
            <person name="Liu J."/>
            <person name="Lv H."/>
            <person name="Li J."/>
            <person name="Wang J."/>
            <person name="Deng Y."/>
            <person name="Ran L."/>
            <person name="Shi X."/>
            <person name="Wang X."/>
            <person name="Wu Q."/>
            <person name="Li C."/>
            <person name="Ren X."/>
            <person name="Wang J."/>
            <person name="Wang X."/>
            <person name="Li D."/>
            <person name="Liu D."/>
            <person name="Zhang X."/>
            <person name="Ji Z."/>
            <person name="Zhao W."/>
            <person name="Sun Y."/>
            <person name="Zhang Z."/>
            <person name="Bao J."/>
            <person name="Han Y."/>
            <person name="Dong L."/>
            <person name="Ji J."/>
            <person name="Chen P."/>
            <person name="Wu S."/>
            <person name="Liu J."/>
            <person name="Xiao Y."/>
            <person name="Bu D."/>
            <person name="Tan J."/>
            <person name="Yang L."/>
            <person name="Ye C."/>
            <person name="Zhang J."/>
            <person name="Xu J."/>
            <person name="Zhou Y."/>
            <person name="Yu Y."/>
            <person name="Zhang B."/>
            <person name="Zhuang S."/>
            <person name="Wei H."/>
            <person name="Liu B."/>
            <person name="Lei M."/>
            <person name="Yu H."/>
            <person name="Li Y."/>
            <person name="Xu H."/>
            <person name="Wei S."/>
            <person name="He X."/>
            <person name="Fang L."/>
            <person name="Zhang Z."/>
            <person name="Zhang Y."/>
            <person name="Huang X."/>
            <person name="Su Z."/>
            <person name="Tong W."/>
            <person name="Li J."/>
            <person name="Tong Z."/>
            <person name="Li S."/>
            <person name="Ye J."/>
            <person name="Wang L."/>
            <person name="Fang L."/>
            <person name="Lei T."/>
            <person name="Chen C.-S."/>
            <person name="Chen H.-C."/>
            <person name="Xu Z."/>
            <person name="Li H."/>
            <person name="Huang H."/>
            <person name="Zhang F."/>
            <person name="Xu H."/>
            <person name="Li N."/>
            <person name="Zhao C."/>
            <person name="Li S."/>
            <person name="Dong L."/>
            <person name="Huang Y."/>
            <person name="Li L."/>
            <person name="Xi Y."/>
            <person name="Qi Q."/>
            <person name="Li W."/>
            <person name="Zhang B."/>
            <person name="Hu W."/>
            <person name="Zhang Y."/>
            <person name="Tian X."/>
            <person name="Jiao Y."/>
            <person name="Liang X."/>
            <person name="Jin J."/>
            <person name="Gao L."/>
            <person name="Zheng W."/>
            <person name="Hao B."/>
            <person name="Liu S.-M."/>
            <person name="Wang W."/>
            <person name="Yuan L."/>
            <person name="Cao M."/>
            <person name="McDermott J."/>
            <person name="Samudrala R."/>
            <person name="Wang J."/>
            <person name="Wong G.K.-S."/>
            <person name="Yang H."/>
        </authorList>
    </citation>
    <scope>NUCLEOTIDE SEQUENCE [LARGE SCALE GENOMIC DNA]</scope>
    <source>
        <strain>cv. 93-11</strain>
    </source>
</reference>
<evidence type="ECO:0000250" key="1"/>
<evidence type="ECO:0000255" key="2">
    <source>
        <dbReference type="PROSITE-ProRule" id="PRU01033"/>
    </source>
</evidence>
<evidence type="ECO:0000256" key="3">
    <source>
        <dbReference type="SAM" id="MobiDB-lite"/>
    </source>
</evidence>
<evidence type="ECO:0000305" key="4"/>
<keyword id="KW-0217">Developmental protein</keyword>
<keyword id="KW-0238">DNA-binding</keyword>
<keyword id="KW-0539">Nucleus</keyword>
<keyword id="KW-1185">Reference proteome</keyword>
<keyword id="KW-0804">Transcription</keyword>
<keyword id="KW-0805">Transcription regulation</keyword>
<protein>
    <recommendedName>
        <fullName>Protein G1-like3</fullName>
    </recommendedName>
</protein>